<name>5HT2B_RAT</name>
<feature type="chain" id="PRO_0000068956" description="5-hydroxytryptamine receptor 2B">
    <location>
        <begin position="1"/>
        <end position="479"/>
    </location>
</feature>
<feature type="topological domain" description="Extracellular" evidence="1">
    <location>
        <begin position="1"/>
        <end position="55"/>
    </location>
</feature>
<feature type="transmembrane region" description="Helical; Name=1" evidence="1">
    <location>
        <begin position="56"/>
        <end position="78"/>
    </location>
</feature>
<feature type="topological domain" description="Cytoplasmic" evidence="1">
    <location>
        <begin position="79"/>
        <end position="89"/>
    </location>
</feature>
<feature type="transmembrane region" description="Helical; Name=2" evidence="1">
    <location>
        <begin position="90"/>
        <end position="112"/>
    </location>
</feature>
<feature type="topological domain" description="Extracellular" evidence="1">
    <location>
        <begin position="113"/>
        <end position="128"/>
    </location>
</feature>
<feature type="transmembrane region" description="Helical; Name=3" evidence="1">
    <location>
        <begin position="129"/>
        <end position="150"/>
    </location>
</feature>
<feature type="topological domain" description="Cytoplasmic" evidence="1">
    <location>
        <begin position="151"/>
        <end position="170"/>
    </location>
</feature>
<feature type="transmembrane region" description="Helical; Name=4" evidence="1">
    <location>
        <begin position="171"/>
        <end position="191"/>
    </location>
</feature>
<feature type="topological domain" description="Extracellular" evidence="1">
    <location>
        <begin position="192"/>
        <end position="215"/>
    </location>
</feature>
<feature type="transmembrane region" description="Helical; Name=5" evidence="1">
    <location>
        <begin position="216"/>
        <end position="238"/>
    </location>
</feature>
<feature type="topological domain" description="Cytoplasmic" evidence="1">
    <location>
        <begin position="239"/>
        <end position="323"/>
    </location>
</feature>
<feature type="transmembrane region" description="Helical; Name=6" evidence="1">
    <location>
        <begin position="324"/>
        <end position="344"/>
    </location>
</feature>
<feature type="topological domain" description="Extracellular" evidence="1">
    <location>
        <begin position="345"/>
        <end position="359"/>
    </location>
</feature>
<feature type="transmembrane region" description="Helical; Name=7" evidence="1">
    <location>
        <begin position="360"/>
        <end position="381"/>
    </location>
</feature>
<feature type="topological domain" description="Cytoplasmic" evidence="1">
    <location>
        <begin position="382"/>
        <end position="479"/>
    </location>
</feature>
<feature type="short sequence motif" description="DRY motif; important for ligand-induced conformation changes" evidence="1">
    <location>
        <begin position="151"/>
        <end position="153"/>
    </location>
</feature>
<feature type="short sequence motif" description="[DE]RFG motif; may stabilize a conformation that preferentially activates signaling via beta-arrestin family members" evidence="1">
    <location>
        <begin position="211"/>
        <end position="214"/>
    </location>
</feature>
<feature type="short sequence motif" description="NPxxY motif; important for ligand-induced conformation changes and signaling" evidence="1">
    <location>
        <begin position="375"/>
        <end position="379"/>
    </location>
</feature>
<feature type="short sequence motif" description="PDZ-binding" evidence="1">
    <location>
        <begin position="477"/>
        <end position="479"/>
    </location>
</feature>
<feature type="binding site" evidence="1">
    <location>
        <position position="134"/>
    </location>
    <ligand>
        <name>ergotamine</name>
        <dbReference type="ChEBI" id="CHEBI:190463"/>
        <note>agonist</note>
    </ligand>
</feature>
<feature type="binding site" evidence="1">
    <location>
        <position position="139"/>
    </location>
    <ligand>
        <name>ergotamine</name>
        <dbReference type="ChEBI" id="CHEBI:190463"/>
        <note>agonist</note>
    </ligand>
</feature>
<feature type="binding site" evidence="1">
    <location>
        <position position="208"/>
    </location>
    <ligand>
        <name>ergotamine</name>
        <dbReference type="ChEBI" id="CHEBI:190463"/>
        <note>agonist</note>
    </ligand>
</feature>
<feature type="site" description="Hydrophobic barrier that decreases the speed of ligand binding and dissociation" evidence="1">
    <location>
        <position position="208"/>
    </location>
</feature>
<feature type="lipid moiety-binding region" description="S-palmitoyl cysteine" evidence="3">
    <location>
        <position position="396"/>
    </location>
</feature>
<feature type="glycosylation site" description="N-linked (GlcNAc...) asparagine" evidence="3">
    <location>
        <position position="203"/>
    </location>
</feature>
<feature type="glycosylation site" description="N-linked (GlcNAc...) asparagine" evidence="3">
    <location>
        <position position="353"/>
    </location>
</feature>
<feature type="disulfide bond" evidence="4">
    <location>
        <begin position="127"/>
        <end position="206"/>
    </location>
</feature>
<feature type="disulfide bond" evidence="4">
    <location>
        <begin position="349"/>
        <end position="352"/>
    </location>
</feature>
<feature type="sequence conflict" description="In Ref. 2." evidence="10" ref="2">
    <original>V</original>
    <variation>A</variation>
    <location>
        <position position="281"/>
    </location>
</feature>
<feature type="sequence conflict" description="In Ref. 2; no nucleotide entry." evidence="10" ref="2">
    <original>T</original>
    <variation>I</variation>
    <location>
        <position position="296"/>
    </location>
</feature>
<dbReference type="EMBL" id="X66842">
    <property type="protein sequence ID" value="CAA47318.1"/>
    <property type="molecule type" value="mRNA"/>
</dbReference>
<dbReference type="PIR" id="S23562">
    <property type="entry name" value="S23562"/>
</dbReference>
<dbReference type="RefSeq" id="NP_058946.1">
    <property type="nucleotide sequence ID" value="NM_017250.1"/>
</dbReference>
<dbReference type="SMR" id="P30994"/>
<dbReference type="BioGRID" id="248214">
    <property type="interactions" value="1"/>
</dbReference>
<dbReference type="CORUM" id="P30994"/>
<dbReference type="FunCoup" id="P30994">
    <property type="interactions" value="174"/>
</dbReference>
<dbReference type="IntAct" id="P30994">
    <property type="interactions" value="1"/>
</dbReference>
<dbReference type="MINT" id="P30994"/>
<dbReference type="STRING" id="10116.ENSRNOP00000023829"/>
<dbReference type="BindingDB" id="P30994"/>
<dbReference type="ChEMBL" id="CHEMBL323"/>
<dbReference type="DrugCentral" id="P30994"/>
<dbReference type="GuidetoPHARMACOLOGY" id="7"/>
<dbReference type="GlyCosmos" id="P30994">
    <property type="glycosylation" value="2 sites, No reported glycans"/>
</dbReference>
<dbReference type="GlyGen" id="P30994">
    <property type="glycosylation" value="2 sites"/>
</dbReference>
<dbReference type="PhosphoSitePlus" id="P30994"/>
<dbReference type="PaxDb" id="10116-ENSRNOP00000023829"/>
<dbReference type="GeneID" id="29581"/>
<dbReference type="KEGG" id="rno:29581"/>
<dbReference type="UCSC" id="RGD:61801">
    <property type="organism name" value="rat"/>
</dbReference>
<dbReference type="AGR" id="RGD:61801"/>
<dbReference type="CTD" id="3357"/>
<dbReference type="RGD" id="61801">
    <property type="gene designation" value="Htr2b"/>
</dbReference>
<dbReference type="eggNOG" id="KOG3656">
    <property type="taxonomic scope" value="Eukaryota"/>
</dbReference>
<dbReference type="InParanoid" id="P30994"/>
<dbReference type="PhylomeDB" id="P30994"/>
<dbReference type="Reactome" id="R-RNO-390666">
    <property type="pathway name" value="Serotonin receptors"/>
</dbReference>
<dbReference type="Reactome" id="R-RNO-416476">
    <property type="pathway name" value="G alpha (q) signalling events"/>
</dbReference>
<dbReference type="PRO" id="PR:P30994"/>
<dbReference type="Proteomes" id="UP000002494">
    <property type="component" value="Unplaced"/>
</dbReference>
<dbReference type="GO" id="GO:0005737">
    <property type="term" value="C:cytoplasm"/>
    <property type="evidence" value="ECO:0000250"/>
    <property type="project" value="UniProtKB"/>
</dbReference>
<dbReference type="GO" id="GO:0030425">
    <property type="term" value="C:dendrite"/>
    <property type="evidence" value="ECO:0000314"/>
    <property type="project" value="RGD"/>
</dbReference>
<dbReference type="GO" id="GO:0098666">
    <property type="term" value="C:G protein-coupled serotonin receptor complex"/>
    <property type="evidence" value="ECO:0000266"/>
    <property type="project" value="RGD"/>
</dbReference>
<dbReference type="GO" id="GO:0043025">
    <property type="term" value="C:neuronal cell body"/>
    <property type="evidence" value="ECO:0000314"/>
    <property type="project" value="RGD"/>
</dbReference>
<dbReference type="GO" id="GO:0005886">
    <property type="term" value="C:plasma membrane"/>
    <property type="evidence" value="ECO:0000314"/>
    <property type="project" value="UniProtKB"/>
</dbReference>
<dbReference type="GO" id="GO:0045202">
    <property type="term" value="C:synapse"/>
    <property type="evidence" value="ECO:0007669"/>
    <property type="project" value="UniProtKB-SubCell"/>
</dbReference>
<dbReference type="GO" id="GO:0004993">
    <property type="term" value="F:G protein-coupled serotonin receptor activity"/>
    <property type="evidence" value="ECO:0000250"/>
    <property type="project" value="UniProtKB"/>
</dbReference>
<dbReference type="GO" id="GO:0001965">
    <property type="term" value="F:G-protein alpha-subunit binding"/>
    <property type="evidence" value="ECO:0000250"/>
    <property type="project" value="UniProtKB"/>
</dbReference>
<dbReference type="GO" id="GO:0001587">
    <property type="term" value="F:Gq/11-coupled serotonin receptor activity"/>
    <property type="evidence" value="ECO:0000266"/>
    <property type="project" value="RGD"/>
</dbReference>
<dbReference type="GO" id="GO:0005096">
    <property type="term" value="F:GTPase activator activity"/>
    <property type="evidence" value="ECO:0000250"/>
    <property type="project" value="UniProtKB"/>
</dbReference>
<dbReference type="GO" id="GO:0030594">
    <property type="term" value="F:neurotransmitter receptor activity"/>
    <property type="evidence" value="ECO:0000318"/>
    <property type="project" value="GO_Central"/>
</dbReference>
<dbReference type="GO" id="GO:0051378">
    <property type="term" value="F:serotonin binding"/>
    <property type="evidence" value="ECO:0000314"/>
    <property type="project" value="RGD"/>
</dbReference>
<dbReference type="GO" id="GO:0099589">
    <property type="term" value="F:serotonin receptor activity"/>
    <property type="evidence" value="ECO:0000266"/>
    <property type="project" value="RGD"/>
</dbReference>
<dbReference type="GO" id="GO:0019722">
    <property type="term" value="P:calcium-mediated signaling"/>
    <property type="evidence" value="ECO:0000250"/>
    <property type="project" value="UniProtKB"/>
</dbReference>
<dbReference type="GO" id="GO:0003300">
    <property type="term" value="P:cardiac muscle hypertrophy"/>
    <property type="evidence" value="ECO:0000250"/>
    <property type="project" value="UniProtKB"/>
</dbReference>
<dbReference type="GO" id="GO:0071418">
    <property type="term" value="P:cellular response to amine stimulus"/>
    <property type="evidence" value="ECO:0000314"/>
    <property type="project" value="RGD"/>
</dbReference>
<dbReference type="GO" id="GO:1904015">
    <property type="term" value="P:cellular response to serotonin"/>
    <property type="evidence" value="ECO:0000314"/>
    <property type="project" value="RGD"/>
</dbReference>
<dbReference type="GO" id="GO:0019934">
    <property type="term" value="P:cGMP-mediated signaling"/>
    <property type="evidence" value="ECO:0000250"/>
    <property type="project" value="UniProtKB"/>
</dbReference>
<dbReference type="GO" id="GO:0007268">
    <property type="term" value="P:chemical synaptic transmission"/>
    <property type="evidence" value="ECO:0000318"/>
    <property type="project" value="GO_Central"/>
</dbReference>
<dbReference type="GO" id="GO:0048598">
    <property type="term" value="P:embryonic morphogenesis"/>
    <property type="evidence" value="ECO:0000250"/>
    <property type="project" value="UniProtKB"/>
</dbReference>
<dbReference type="GO" id="GO:0070371">
    <property type="term" value="P:ERK1 and ERK2 cascade"/>
    <property type="evidence" value="ECO:0000250"/>
    <property type="project" value="UniProtKB"/>
</dbReference>
<dbReference type="GO" id="GO:0007186">
    <property type="term" value="P:G protein-coupled receptor signaling pathway"/>
    <property type="evidence" value="ECO:0000250"/>
    <property type="project" value="UniProtKB"/>
</dbReference>
<dbReference type="GO" id="GO:0007187">
    <property type="term" value="P:G protein-coupled receptor signaling pathway, coupled to cyclic nucleotide second messenger"/>
    <property type="evidence" value="ECO:0000318"/>
    <property type="project" value="GO_Central"/>
</dbReference>
<dbReference type="GO" id="GO:0098664">
    <property type="term" value="P:G protein-coupled serotonin receptor signaling pathway"/>
    <property type="evidence" value="ECO:0000250"/>
    <property type="project" value="UniProtKB"/>
</dbReference>
<dbReference type="GO" id="GO:0007507">
    <property type="term" value="P:heart development"/>
    <property type="evidence" value="ECO:0000266"/>
    <property type="project" value="RGD"/>
</dbReference>
<dbReference type="GO" id="GO:0003007">
    <property type="term" value="P:heart morphogenesis"/>
    <property type="evidence" value="ECO:0000250"/>
    <property type="project" value="UniProtKB"/>
</dbReference>
<dbReference type="GO" id="GO:0035733">
    <property type="term" value="P:hepatic stellate cell activation"/>
    <property type="evidence" value="ECO:0000270"/>
    <property type="project" value="RGD"/>
</dbReference>
<dbReference type="GO" id="GO:0043647">
    <property type="term" value="P:inositol phosphate metabolic process"/>
    <property type="evidence" value="ECO:0000270"/>
    <property type="project" value="RGD"/>
</dbReference>
<dbReference type="GO" id="GO:0014827">
    <property type="term" value="P:intestine smooth muscle contraction"/>
    <property type="evidence" value="ECO:0000250"/>
    <property type="project" value="UniProtKB"/>
</dbReference>
<dbReference type="GO" id="GO:0006874">
    <property type="term" value="P:intracellular calcium ion homeostasis"/>
    <property type="evidence" value="ECO:0000266"/>
    <property type="project" value="RGD"/>
</dbReference>
<dbReference type="GO" id="GO:0034220">
    <property type="term" value="P:monoatomic ion transmembrane transport"/>
    <property type="evidence" value="ECO:0000314"/>
    <property type="project" value="RGD"/>
</dbReference>
<dbReference type="GO" id="GO:0043066">
    <property type="term" value="P:negative regulation of apoptotic process"/>
    <property type="evidence" value="ECO:0000250"/>
    <property type="project" value="UniProtKB"/>
</dbReference>
<dbReference type="GO" id="GO:0014033">
    <property type="term" value="P:neural crest cell differentiation"/>
    <property type="evidence" value="ECO:0000250"/>
    <property type="project" value="UniProtKB"/>
</dbReference>
<dbReference type="GO" id="GO:0001755">
    <property type="term" value="P:neural crest cell migration"/>
    <property type="evidence" value="ECO:0000250"/>
    <property type="project" value="UniProtKB"/>
</dbReference>
<dbReference type="GO" id="GO:0007208">
    <property type="term" value="P:phospholipase C-activating serotonin receptor signaling pathway"/>
    <property type="evidence" value="ECO:0000250"/>
    <property type="project" value="UniProtKB"/>
</dbReference>
<dbReference type="GO" id="GO:0043123">
    <property type="term" value="P:positive regulation of canonical NF-kappaB signal transduction"/>
    <property type="evidence" value="ECO:0000250"/>
    <property type="project" value="UniProtKB"/>
</dbReference>
<dbReference type="GO" id="GO:0051781">
    <property type="term" value="P:positive regulation of cell division"/>
    <property type="evidence" value="ECO:0000250"/>
    <property type="project" value="UniProtKB"/>
</dbReference>
<dbReference type="GO" id="GO:0008284">
    <property type="term" value="P:positive regulation of cell population proliferation"/>
    <property type="evidence" value="ECO:0000250"/>
    <property type="project" value="UniProtKB"/>
</dbReference>
<dbReference type="GO" id="GO:0001819">
    <property type="term" value="P:positive regulation of cytokine production"/>
    <property type="evidence" value="ECO:0000250"/>
    <property type="project" value="UniProtKB"/>
</dbReference>
<dbReference type="GO" id="GO:0001938">
    <property type="term" value="P:positive regulation of endothelial cell proliferation"/>
    <property type="evidence" value="ECO:0000250"/>
    <property type="project" value="UniProtKB"/>
</dbReference>
<dbReference type="GO" id="GO:0070374">
    <property type="term" value="P:positive regulation of ERK1 and ERK2 cascade"/>
    <property type="evidence" value="ECO:0000250"/>
    <property type="project" value="UniProtKB"/>
</dbReference>
<dbReference type="GO" id="GO:0010513">
    <property type="term" value="P:positive regulation of phosphatidylinositol biosynthetic process"/>
    <property type="evidence" value="ECO:0000250"/>
    <property type="project" value="UniProtKB"/>
</dbReference>
<dbReference type="GO" id="GO:0050795">
    <property type="term" value="P:regulation of behavior"/>
    <property type="evidence" value="ECO:0000250"/>
    <property type="project" value="UniProtKB"/>
</dbReference>
<dbReference type="GO" id="GO:0051209">
    <property type="term" value="P:release of sequestered calcium ion into cytosol"/>
    <property type="evidence" value="ECO:0000250"/>
    <property type="project" value="UniProtKB"/>
</dbReference>
<dbReference type="GO" id="GO:0009410">
    <property type="term" value="P:response to xenobiotic stimulus"/>
    <property type="evidence" value="ECO:0000266"/>
    <property type="project" value="RGD"/>
</dbReference>
<dbReference type="GO" id="GO:0007210">
    <property type="term" value="P:serotonin receptor signaling pathway"/>
    <property type="evidence" value="ECO:0000318"/>
    <property type="project" value="GO_Central"/>
</dbReference>
<dbReference type="GO" id="GO:0042310">
    <property type="term" value="P:vasoconstriction"/>
    <property type="evidence" value="ECO:0000250"/>
    <property type="project" value="UniProtKB"/>
</dbReference>
<dbReference type="FunFam" id="1.20.1070.10:FF:000523">
    <property type="entry name" value="5-hydroxytryptamine receptor 2B"/>
    <property type="match status" value="2"/>
</dbReference>
<dbReference type="Gene3D" id="1.20.1070.10">
    <property type="entry name" value="Rhodopsin 7-helix transmembrane proteins"/>
    <property type="match status" value="1"/>
</dbReference>
<dbReference type="InterPro" id="IPR000482">
    <property type="entry name" value="5HT2B_rcpt"/>
</dbReference>
<dbReference type="InterPro" id="IPR002231">
    <property type="entry name" value="5HT_rcpt"/>
</dbReference>
<dbReference type="InterPro" id="IPR000276">
    <property type="entry name" value="GPCR_Rhodpsn"/>
</dbReference>
<dbReference type="InterPro" id="IPR017452">
    <property type="entry name" value="GPCR_Rhodpsn_7TM"/>
</dbReference>
<dbReference type="PANTHER" id="PTHR24247">
    <property type="entry name" value="5-HYDROXYTRYPTAMINE RECEPTOR"/>
    <property type="match status" value="1"/>
</dbReference>
<dbReference type="PANTHER" id="PTHR24247:SF31">
    <property type="entry name" value="5-HYDROXYTRYPTAMINE RECEPTOR 2B"/>
    <property type="match status" value="1"/>
</dbReference>
<dbReference type="Pfam" id="PF00001">
    <property type="entry name" value="7tm_1"/>
    <property type="match status" value="1"/>
</dbReference>
<dbReference type="PRINTS" id="PR00651">
    <property type="entry name" value="5HT2BRECEPTR"/>
</dbReference>
<dbReference type="PRINTS" id="PR01101">
    <property type="entry name" value="5HTRECEPTOR"/>
</dbReference>
<dbReference type="PRINTS" id="PR00237">
    <property type="entry name" value="GPCRRHODOPSN"/>
</dbReference>
<dbReference type="SMART" id="SM01381">
    <property type="entry name" value="7TM_GPCR_Srsx"/>
    <property type="match status" value="1"/>
</dbReference>
<dbReference type="SUPFAM" id="SSF81321">
    <property type="entry name" value="Family A G protein-coupled receptor-like"/>
    <property type="match status" value="1"/>
</dbReference>
<dbReference type="PROSITE" id="PS00237">
    <property type="entry name" value="G_PROTEIN_RECEP_F1_1"/>
    <property type="match status" value="1"/>
</dbReference>
<dbReference type="PROSITE" id="PS50262">
    <property type="entry name" value="G_PROTEIN_RECEP_F1_2"/>
    <property type="match status" value="1"/>
</dbReference>
<accession>P30994</accession>
<accession>Q9QW44</accession>
<comment type="function">
    <text evidence="1 2 5 6 7">G-protein coupled receptor for 5-hydroxytryptamine (serotonin) (PubMed:1331748, PubMed:1505525). Also functions as a receptor for various ergot alkaloid derivatives and psychoactive substances (PubMed:22525520). Ligand binding causes a conformation change that triggers signaling via guanine nucleotide-binding proteins (G proteins) and modulates the activity of downstream effectors (PubMed:1331748, PubMed:1505525). HTR2B is coupled to G(q)/G(11) G alpha proteins and activates phospholipase C-beta, releasing diacylglycerol (DAG) and inositol 1,4,5-trisphosphate (IP3) second messengers that modulate the activity of phosphatidylinositol 3-kinase and promote the release of Ca(2+) ions from intracellular stores, respectively (By similarity). Beta-arrestin family members inhibit signaling via G proteins and mediate activation of alternative signaling pathways (By similarity). Plays a role in the regulation of dopamine and 5-hydroxytryptamine release, 5-hydroxytryptamine uptake and in the regulation of extracellular dopamine and 5-hydroxytryptamine levels, and thereby affects neural activity (By similarity). May play a role in the perception of pain (PubMed:22525520). Plays a role in the regulation of behavior, including impulsive behavior (By similarity). Required for normal proliferation of embryonic cardiac myocytes and normal heart development (By similarity). Protects cardiomyocytes against apoptosis (By similarity). Plays a role in the adaptation of pulmonary arteries to chronic hypoxia (By similarity). Plays a role in vasoconstriction (By similarity). Required for normal osteoblast function and proliferation, and for maintaining normal bone density (By similarity). Required for normal proliferation of the interstitial cells of Cajal in the intestine (By similarity).</text>
</comment>
<comment type="subunit">
    <text evidence="1">Interacts (via C-terminus) with MPDZ.</text>
</comment>
<comment type="subcellular location">
    <subcellularLocation>
        <location evidence="5 6 7">Cell membrane</location>
        <topology evidence="6">Multi-pass membrane protein</topology>
    </subcellularLocation>
    <subcellularLocation>
        <location evidence="2">Synapse</location>
        <location evidence="2">Synaptosome</location>
    </subcellularLocation>
</comment>
<comment type="tissue specificity">
    <text evidence="5 6">Stomach fundus.</text>
</comment>
<comment type="domain">
    <text evidence="1">Ligands are bound in a hydrophobic pocket formed by the transmembrane helices.</text>
</comment>
<comment type="similarity">
    <text evidence="4">Belongs to the G-protein coupled receptor 1 family.</text>
</comment>
<sequence length="479" mass="53652">MASSYKMSEQSTISEHILQKTCDHLILTDRSGLKAESAAEEMKQTAENQGNTVHWAALLIFAVIIPTIGGNILVILAVSLEKRLQYATNYFLMSLAVADLLVGLFVMPIALLTIMFEATWPLPLALCPAWLFLDVLFSTASIMHLCAISLDRYIAIKKPIQANQCNSRTTAFVKITVVWLISIGIAIPVPIKGIEADVVNAHNITCELTKDRFGSFMLFGSLAAFFAPLTIMIVTYFLTIHALRKKAYLVRNRPPQRLTRWTVSTVLQREDSSFSSPEKMVMLDGSHKDKILPNSTDETLMRRMSSAGKKPAQTISNEQRASKVLGIVFLFFLLMWCPFFITNVTLALCDSCNQTTLKTLLQIFVWVGYVSSGVNPLIYTLFNKTFREAFGRYITCNYQATKSVKVLRKCSSTLYFGNSMVENSKFFTKHGIRNGINPAMYQSPVRLRSSTIQSSSIILLNTFLTENDGDKVEDQVSYI</sequence>
<protein>
    <recommendedName>
        <fullName>5-hydroxytryptamine receptor 2B</fullName>
        <shortName>5-HT-2B</shortName>
        <shortName>5-HT2B</shortName>
    </recommendedName>
    <alternativeName>
        <fullName evidence="8">5-HT-2F</fullName>
    </alternativeName>
    <alternativeName>
        <fullName>Serotonin receptor 2B</fullName>
    </alternativeName>
    <alternativeName>
        <fullName evidence="9">Stomach fundus serotonin receptor</fullName>
    </alternativeName>
</protein>
<evidence type="ECO:0000250" key="1">
    <source>
        <dbReference type="UniProtKB" id="P41595"/>
    </source>
</evidence>
<evidence type="ECO:0000250" key="2">
    <source>
        <dbReference type="UniProtKB" id="Q02152"/>
    </source>
</evidence>
<evidence type="ECO:0000255" key="3"/>
<evidence type="ECO:0000255" key="4">
    <source>
        <dbReference type="PROSITE-ProRule" id="PRU00521"/>
    </source>
</evidence>
<evidence type="ECO:0000269" key="5">
    <source>
    </source>
</evidence>
<evidence type="ECO:0000269" key="6">
    <source>
    </source>
</evidence>
<evidence type="ECO:0000269" key="7">
    <source>
    </source>
</evidence>
<evidence type="ECO:0000303" key="8">
    <source>
    </source>
</evidence>
<evidence type="ECO:0000303" key="9">
    <source>
    </source>
</evidence>
<evidence type="ECO:0000305" key="10"/>
<keyword id="KW-0085">Behavior</keyword>
<keyword id="KW-1003">Cell membrane</keyword>
<keyword id="KW-1015">Disulfide bond</keyword>
<keyword id="KW-0297">G-protein coupled receptor</keyword>
<keyword id="KW-0325">Glycoprotein</keyword>
<keyword id="KW-0449">Lipoprotein</keyword>
<keyword id="KW-0472">Membrane</keyword>
<keyword id="KW-0564">Palmitate</keyword>
<keyword id="KW-0675">Receptor</keyword>
<keyword id="KW-1185">Reference proteome</keyword>
<keyword id="KW-0770">Synapse</keyword>
<keyword id="KW-0771">Synaptosome</keyword>
<keyword id="KW-0807">Transducer</keyword>
<keyword id="KW-0812">Transmembrane</keyword>
<keyword id="KW-1133">Transmembrane helix</keyword>
<proteinExistence type="evidence at transcript level"/>
<gene>
    <name type="primary">Htr2b</name>
    <name type="synonym">Srl</name>
</gene>
<organism>
    <name type="scientific">Rattus norvegicus</name>
    <name type="common">Rat</name>
    <dbReference type="NCBI Taxonomy" id="10116"/>
    <lineage>
        <taxon>Eukaryota</taxon>
        <taxon>Metazoa</taxon>
        <taxon>Chordata</taxon>
        <taxon>Craniata</taxon>
        <taxon>Vertebrata</taxon>
        <taxon>Euteleostomi</taxon>
        <taxon>Mammalia</taxon>
        <taxon>Eutheria</taxon>
        <taxon>Euarchontoglires</taxon>
        <taxon>Glires</taxon>
        <taxon>Rodentia</taxon>
        <taxon>Myomorpha</taxon>
        <taxon>Muroidea</taxon>
        <taxon>Muridae</taxon>
        <taxon>Murinae</taxon>
        <taxon>Rattus</taxon>
    </lineage>
</organism>
<reference key="1">
    <citation type="journal article" date="1992" name="EMBO J.">
        <title>Cloning and functional characterization of the rat stomach fundus serotonin receptor.</title>
        <authorList>
            <person name="Foguet M."/>
            <person name="Hoyer D."/>
            <person name="Pardo L.A."/>
            <person name="Parekh A."/>
            <person name="Kluxen F.-W."/>
            <person name="Kalkman M.O."/>
            <person name="Stuehmer W."/>
            <person name="Luebbert H."/>
        </authorList>
    </citation>
    <scope>NUCLEOTIDE SEQUENCE [MRNA]</scope>
    <scope>FUNCTION</scope>
    <scope>SUBCELLULAR LOCATION</scope>
    <scope>TISSUE SPECIFICITY</scope>
    <source>
        <strain>Sprague-Dawley</strain>
    </source>
</reference>
<reference key="2">
    <citation type="journal article" date="1992" name="Mol. Pharmacol.">
        <title>Molecular cloning, functional expression, and pharmacological characterization of a novel serotonin receptor (5-hydroxytryptamine2F) from rat stomach fundus.</title>
        <authorList>
            <person name="Kursar J.D."/>
            <person name="Nelson D.L."/>
            <person name="Wainscott D.B."/>
            <person name="Cohen M.L."/>
            <person name="Baez M."/>
        </authorList>
    </citation>
    <scope>NUCLEOTIDE SEQUENCE [MRNA]</scope>
    <scope>FUNCTION</scope>
    <scope>SUBCELLULAR LOCATION</scope>
    <scope>TISSUE SPECIFICITY</scope>
    <source>
        <tissue>Gastric fundus</tissue>
    </source>
</reference>
<reference key="3">
    <citation type="journal article" date="2012" name="Pain">
        <title>Antinociceptive effect of peripheral serotonin 5-HT2B receptor activation on neuropathic pain.</title>
        <authorList>
            <person name="Urtikova N."/>
            <person name="Berson N."/>
            <person name="Van Steenwinckel J."/>
            <person name="Doly S."/>
            <person name="Truchetto J."/>
            <person name="Maroteaux L."/>
            <person name="Pohl M."/>
            <person name="Conrath M."/>
        </authorList>
    </citation>
    <scope>FUNCTION</scope>
    <scope>SUBCELLULAR LOCATION</scope>
</reference>